<name>CP3AJ_CAPHE</name>
<sequence>RHEVELVAQTTIFIFGGYETTSTSLSFIIYELATHPDVQQKLQEEIDATFPNKAPPTYDALVQMEYLDMVVNETLRMFPIAGRLERLCKKDVEIHGVSIPKGTTVMVPLFVLHNNPEFWPEPEEFRPERFSKKNKDGINPYVYLPFGTGPRNCVGMRFALMNIKLALVRILQNFSFIPCKETQIPLKLYTQGLTQPEQPVILKVAPRGLGPQAEPDFL</sequence>
<feature type="chain" id="PRO_0000051802" description="Cytochrome P450 3A19">
    <location>
        <begin position="1" status="less than"/>
        <end position="218"/>
    </location>
</feature>
<feature type="binding site" description="axial binding residue" evidence="1">
    <location>
        <position position="153"/>
    </location>
    <ligand>
        <name>heme</name>
        <dbReference type="ChEBI" id="CHEBI:30413"/>
    </ligand>
    <ligandPart>
        <name>Fe</name>
        <dbReference type="ChEBI" id="CHEBI:18248"/>
    </ligandPart>
</feature>
<feature type="non-terminal residue">
    <location>
        <position position="1"/>
    </location>
</feature>
<gene>
    <name type="primary">CYP3A19</name>
</gene>
<protein>
    <recommendedName>
        <fullName>Cytochrome P450 3A19</fullName>
        <ecNumber>1.14.14.1</ecNumber>
    </recommendedName>
    <alternativeName>
        <fullName>CYPIIIA19</fullName>
    </alternativeName>
</protein>
<organism>
    <name type="scientific">Capra hircus aegagrus</name>
    <name type="common">Wild goat</name>
    <name type="synonym">Capra aegagrus</name>
    <dbReference type="NCBI Taxonomy" id="9923"/>
    <lineage>
        <taxon>Eukaryota</taxon>
        <taxon>Metazoa</taxon>
        <taxon>Chordata</taxon>
        <taxon>Craniata</taxon>
        <taxon>Vertebrata</taxon>
        <taxon>Euteleostomi</taxon>
        <taxon>Mammalia</taxon>
        <taxon>Eutheria</taxon>
        <taxon>Laurasiatheria</taxon>
        <taxon>Artiodactyla</taxon>
        <taxon>Ruminantia</taxon>
        <taxon>Pecora</taxon>
        <taxon>Bovidae</taxon>
        <taxon>Caprinae</taxon>
        <taxon>Capra</taxon>
    </lineage>
</organism>
<keyword id="KW-0256">Endoplasmic reticulum</keyword>
<keyword id="KW-0349">Heme</keyword>
<keyword id="KW-0408">Iron</keyword>
<keyword id="KW-0472">Membrane</keyword>
<keyword id="KW-0479">Metal-binding</keyword>
<keyword id="KW-0492">Microsome</keyword>
<keyword id="KW-0503">Monooxygenase</keyword>
<keyword id="KW-0560">Oxidoreductase</keyword>
<accession>P79152</accession>
<evidence type="ECO:0000250" key="1"/>
<evidence type="ECO:0000305" key="2"/>
<proteinExistence type="evidence at transcript level"/>
<comment type="function">
    <text>Cytochromes P450 are a group of heme-thiolate monooxygenases. In liver microsomes, this enzyme is involved in an NADPH-dependent electron transport pathway. It oxidizes a variety of structurally unrelated compounds, including steroids, fatty acids, and xenobiotics.</text>
</comment>
<comment type="catalytic activity">
    <reaction>
        <text>an organic molecule + reduced [NADPH--hemoprotein reductase] + O2 = an alcohol + oxidized [NADPH--hemoprotein reductase] + H2O + H(+)</text>
        <dbReference type="Rhea" id="RHEA:17149"/>
        <dbReference type="Rhea" id="RHEA-COMP:11964"/>
        <dbReference type="Rhea" id="RHEA-COMP:11965"/>
        <dbReference type="ChEBI" id="CHEBI:15377"/>
        <dbReference type="ChEBI" id="CHEBI:15378"/>
        <dbReference type="ChEBI" id="CHEBI:15379"/>
        <dbReference type="ChEBI" id="CHEBI:30879"/>
        <dbReference type="ChEBI" id="CHEBI:57618"/>
        <dbReference type="ChEBI" id="CHEBI:58210"/>
        <dbReference type="ChEBI" id="CHEBI:142491"/>
        <dbReference type="EC" id="1.14.14.1"/>
    </reaction>
</comment>
<comment type="cofactor">
    <cofactor evidence="1">
        <name>heme</name>
        <dbReference type="ChEBI" id="CHEBI:30413"/>
    </cofactor>
</comment>
<comment type="subcellular location">
    <subcellularLocation>
        <location>Endoplasmic reticulum membrane</location>
        <topology>Peripheral membrane protein</topology>
    </subcellularLocation>
    <subcellularLocation>
        <location>Microsome membrane</location>
        <topology>Peripheral membrane protein</topology>
    </subcellularLocation>
</comment>
<comment type="induction">
    <text>P450 can be induced to high levels in liver and other tissues by various foreign compounds, including drugs, pesticides, and carcinogens.</text>
</comment>
<comment type="similarity">
    <text evidence="2">Belongs to the cytochrome P450 family.</text>
</comment>
<dbReference type="EC" id="1.14.14.1"/>
<dbReference type="EMBL" id="X76503">
    <property type="protein sequence ID" value="CAA54038.1"/>
    <property type="molecule type" value="mRNA"/>
</dbReference>
<dbReference type="SMR" id="P79152"/>
<dbReference type="GO" id="GO:0005789">
    <property type="term" value="C:endoplasmic reticulum membrane"/>
    <property type="evidence" value="ECO:0007669"/>
    <property type="project" value="UniProtKB-SubCell"/>
</dbReference>
<dbReference type="GO" id="GO:0020037">
    <property type="term" value="F:heme binding"/>
    <property type="evidence" value="ECO:0007669"/>
    <property type="project" value="InterPro"/>
</dbReference>
<dbReference type="GO" id="GO:0005506">
    <property type="term" value="F:iron ion binding"/>
    <property type="evidence" value="ECO:0007669"/>
    <property type="project" value="InterPro"/>
</dbReference>
<dbReference type="GO" id="GO:0016712">
    <property type="term" value="F:oxidoreductase activity, acting on paired donors, with incorporation or reduction of molecular oxygen, reduced flavin or flavoprotein as one donor, and incorporation of one atom of oxygen"/>
    <property type="evidence" value="ECO:0007669"/>
    <property type="project" value="UniProtKB-EC"/>
</dbReference>
<dbReference type="GO" id="GO:0050649">
    <property type="term" value="F:testosterone 6-beta-hydroxylase activity"/>
    <property type="evidence" value="ECO:0007669"/>
    <property type="project" value="TreeGrafter"/>
</dbReference>
<dbReference type="GO" id="GO:0070989">
    <property type="term" value="P:oxidative demethylation"/>
    <property type="evidence" value="ECO:0007669"/>
    <property type="project" value="TreeGrafter"/>
</dbReference>
<dbReference type="GO" id="GO:0008202">
    <property type="term" value="P:steroid metabolic process"/>
    <property type="evidence" value="ECO:0007669"/>
    <property type="project" value="TreeGrafter"/>
</dbReference>
<dbReference type="FunFam" id="1.10.630.10:FF:000182">
    <property type="entry name" value="Cytochrome P450 3A4"/>
    <property type="match status" value="1"/>
</dbReference>
<dbReference type="Gene3D" id="1.10.630.10">
    <property type="entry name" value="Cytochrome P450"/>
    <property type="match status" value="1"/>
</dbReference>
<dbReference type="InterPro" id="IPR001128">
    <property type="entry name" value="Cyt_P450"/>
</dbReference>
<dbReference type="InterPro" id="IPR017972">
    <property type="entry name" value="Cyt_P450_CS"/>
</dbReference>
<dbReference type="InterPro" id="IPR002401">
    <property type="entry name" value="Cyt_P450_E_grp-I"/>
</dbReference>
<dbReference type="InterPro" id="IPR036396">
    <property type="entry name" value="Cyt_P450_sf"/>
</dbReference>
<dbReference type="InterPro" id="IPR050705">
    <property type="entry name" value="Cytochrome_P450_3A"/>
</dbReference>
<dbReference type="PANTHER" id="PTHR24302:SF38">
    <property type="entry name" value="CYTOCHROME P450 3A5"/>
    <property type="match status" value="1"/>
</dbReference>
<dbReference type="PANTHER" id="PTHR24302">
    <property type="entry name" value="CYTOCHROME P450 FAMILY 3"/>
    <property type="match status" value="1"/>
</dbReference>
<dbReference type="Pfam" id="PF00067">
    <property type="entry name" value="p450"/>
    <property type="match status" value="1"/>
</dbReference>
<dbReference type="PRINTS" id="PR00463">
    <property type="entry name" value="EP450I"/>
</dbReference>
<dbReference type="PRINTS" id="PR00385">
    <property type="entry name" value="P450"/>
</dbReference>
<dbReference type="SUPFAM" id="SSF48264">
    <property type="entry name" value="Cytochrome P450"/>
    <property type="match status" value="1"/>
</dbReference>
<dbReference type="PROSITE" id="PS00086">
    <property type="entry name" value="CYTOCHROME_P450"/>
    <property type="match status" value="1"/>
</dbReference>
<reference key="1">
    <citation type="submission" date="1993-12" db="EMBL/GenBank/DDBJ databases">
        <authorList>
            <person name="Zeilmaker W.M."/>
            <person name="van 't Klooster G.A.E."/>
            <person name="Gremmels-Gehrmann J.F."/>
            <person name="van Miert A.S.J.P.A."/>
            <person name="Horbach G.J.M.J."/>
        </authorList>
    </citation>
    <scope>NUCLEOTIDE SEQUENCE [MRNA]</scope>
    <source>
        <strain>West-African dwarf</strain>
        <tissue>Liver</tissue>
    </source>
</reference>